<comment type="function">
    <text evidence="1">Fatty acyl-coenzyme A (CoA) diphosphatase that hydrolyzes fatty acyl-CoA to yield acyl-4'-phosphopantetheine and adenosine 3',5'-bisphosphate (By similarity). Mediates the hydrolysis of a wide range of CoA esters, including choloyl-CoA and branched-chain fatty-acyl-CoA esters and at low substrate concentrations medium and long-chain fatty-acyl-CoA esters are the primary substrates (By similarity). Highest activity seen with medium-chain acyl-CoA esters and higher rates of activity seen with the unsaturated acyl-CoA esters compared with the saturated esters (By similarity). Exhibits decapping activity towards dpCoA-capped RNAs in vitro (By similarity).</text>
</comment>
<comment type="catalytic activity">
    <reaction evidence="1">
        <text>an acyl-CoA + H2O = an acyl-4'-phosphopantetheine + adenosine 3',5'-bisphosphate + 2 H(+)</text>
        <dbReference type="Rhea" id="RHEA:50044"/>
        <dbReference type="ChEBI" id="CHEBI:15377"/>
        <dbReference type="ChEBI" id="CHEBI:15378"/>
        <dbReference type="ChEBI" id="CHEBI:58342"/>
        <dbReference type="ChEBI" id="CHEBI:58343"/>
        <dbReference type="ChEBI" id="CHEBI:132023"/>
    </reaction>
    <physiologicalReaction direction="left-to-right" evidence="1">
        <dbReference type="Rhea" id="RHEA:50045"/>
    </physiologicalReaction>
</comment>
<comment type="catalytic activity">
    <reaction evidence="1">
        <text>CoA + H2O = (R)-4'-phosphopantetheine + adenosine 3',5'-bisphosphate + 2 H(+)</text>
        <dbReference type="Rhea" id="RHEA:64988"/>
        <dbReference type="ChEBI" id="CHEBI:15377"/>
        <dbReference type="ChEBI" id="CHEBI:15378"/>
        <dbReference type="ChEBI" id="CHEBI:57287"/>
        <dbReference type="ChEBI" id="CHEBI:58343"/>
        <dbReference type="ChEBI" id="CHEBI:61723"/>
        <dbReference type="EC" id="3.6.1.77"/>
    </reaction>
    <physiologicalReaction direction="left-to-right" evidence="1">
        <dbReference type="Rhea" id="RHEA:64989"/>
    </physiologicalReaction>
</comment>
<comment type="catalytic activity">
    <reaction evidence="1">
        <text>hexanoyl-CoA + H2O = hexanoyl-4'-phosphopantetheine + adenosine 3',5'-bisphosphate + 2 H(+)</text>
        <dbReference type="Rhea" id="RHEA:49980"/>
        <dbReference type="ChEBI" id="CHEBI:15377"/>
        <dbReference type="ChEBI" id="CHEBI:15378"/>
        <dbReference type="ChEBI" id="CHEBI:58343"/>
        <dbReference type="ChEBI" id="CHEBI:62620"/>
        <dbReference type="ChEBI" id="CHEBI:132012"/>
    </reaction>
    <physiologicalReaction direction="left-to-right" evidence="1">
        <dbReference type="Rhea" id="RHEA:49981"/>
    </physiologicalReaction>
</comment>
<comment type="catalytic activity">
    <reaction evidence="1">
        <text>octanoyl-CoA + H2O = S-octanoyl-4'-phosphopantetheine + adenosine 3',5'-bisphosphate + 2 H(+)</text>
        <dbReference type="Rhea" id="RHEA:50016"/>
        <dbReference type="ChEBI" id="CHEBI:15377"/>
        <dbReference type="ChEBI" id="CHEBI:15378"/>
        <dbReference type="ChEBI" id="CHEBI:57386"/>
        <dbReference type="ChEBI" id="CHEBI:58343"/>
        <dbReference type="ChEBI" id="CHEBI:132013"/>
    </reaction>
    <physiologicalReaction direction="left-to-right" evidence="1">
        <dbReference type="Rhea" id="RHEA:50017"/>
    </physiologicalReaction>
</comment>
<comment type="catalytic activity">
    <reaction evidence="1">
        <text>butanoyl-CoA + H2O = S-butanoyl-4'-phosphopantetheine + adenosine 3',5'-bisphosphate + 2 H(+)</text>
        <dbReference type="Rhea" id="RHEA:49976"/>
        <dbReference type="ChEBI" id="CHEBI:15377"/>
        <dbReference type="ChEBI" id="CHEBI:15378"/>
        <dbReference type="ChEBI" id="CHEBI:57371"/>
        <dbReference type="ChEBI" id="CHEBI:58343"/>
        <dbReference type="ChEBI" id="CHEBI:132011"/>
    </reaction>
    <physiologicalReaction direction="left-to-right" evidence="1">
        <dbReference type="Rhea" id="RHEA:49977"/>
    </physiologicalReaction>
</comment>
<comment type="catalytic activity">
    <reaction evidence="1">
        <text>propanoyl-CoA + H2O = propanoyl-4'-phosphopantetheine + adenosine 3',5'-bisphosphate + 2 H(+)</text>
        <dbReference type="Rhea" id="RHEA:67464"/>
        <dbReference type="ChEBI" id="CHEBI:15377"/>
        <dbReference type="ChEBI" id="CHEBI:15378"/>
        <dbReference type="ChEBI" id="CHEBI:57392"/>
        <dbReference type="ChEBI" id="CHEBI:58343"/>
        <dbReference type="ChEBI" id="CHEBI:172362"/>
    </reaction>
    <physiologicalReaction direction="left-to-right" evidence="1">
        <dbReference type="Rhea" id="RHEA:67465"/>
    </physiologicalReaction>
</comment>
<comment type="catalytic activity">
    <reaction evidence="1">
        <text>malonyl-CoA + H2O = malonyl-4'-phosphopantetheine + adenosine 3',5'-bisphosphate + 2 H(+)</text>
        <dbReference type="Rhea" id="RHEA:67468"/>
        <dbReference type="ChEBI" id="CHEBI:15377"/>
        <dbReference type="ChEBI" id="CHEBI:15378"/>
        <dbReference type="ChEBI" id="CHEBI:57384"/>
        <dbReference type="ChEBI" id="CHEBI:58343"/>
        <dbReference type="ChEBI" id="CHEBI:172363"/>
    </reaction>
    <physiologicalReaction direction="left-to-right" evidence="1">
        <dbReference type="Rhea" id="RHEA:67469"/>
    </physiologicalReaction>
</comment>
<comment type="catalytic activity">
    <reaction evidence="1">
        <text>succinyl-CoA + H2O = succinyl-4'-phosphopantetheine + adenosine 3',5'-bisphosphate + 2 H(+)</text>
        <dbReference type="Rhea" id="RHEA:67472"/>
        <dbReference type="ChEBI" id="CHEBI:15377"/>
        <dbReference type="ChEBI" id="CHEBI:15378"/>
        <dbReference type="ChEBI" id="CHEBI:57292"/>
        <dbReference type="ChEBI" id="CHEBI:58343"/>
        <dbReference type="ChEBI" id="CHEBI:172364"/>
    </reaction>
    <physiologicalReaction direction="left-to-right" evidence="1">
        <dbReference type="Rhea" id="RHEA:67473"/>
    </physiologicalReaction>
</comment>
<comment type="catalytic activity">
    <reaction evidence="1">
        <text>choloyl-CoA + H2O = S-choloyl-4'-phosphopantetheine + adenosine 3',5'-bisphosphate + 2 H(+)</text>
        <dbReference type="Rhea" id="RHEA:50036"/>
        <dbReference type="ChEBI" id="CHEBI:15377"/>
        <dbReference type="ChEBI" id="CHEBI:15378"/>
        <dbReference type="ChEBI" id="CHEBI:57373"/>
        <dbReference type="ChEBI" id="CHEBI:58343"/>
        <dbReference type="ChEBI" id="CHEBI:132020"/>
    </reaction>
    <physiologicalReaction direction="left-to-right" evidence="1">
        <dbReference type="Rhea" id="RHEA:50037"/>
    </physiologicalReaction>
</comment>
<comment type="catalytic activity">
    <reaction evidence="1">
        <text>4,8-dimethylnonanoyl-CoA + H2O = S-(4,8-dimethylnonanoyl)-4'-phosphopantetheine + adenosine 3',5'-bisphosphate + 2 H(+)</text>
        <dbReference type="Rhea" id="RHEA:67524"/>
        <dbReference type="ChEBI" id="CHEBI:15377"/>
        <dbReference type="ChEBI" id="CHEBI:15378"/>
        <dbReference type="ChEBI" id="CHEBI:58343"/>
        <dbReference type="ChEBI" id="CHEBI:77061"/>
        <dbReference type="ChEBI" id="CHEBI:172385"/>
    </reaction>
    <physiologicalReaction direction="left-to-right" evidence="1">
        <dbReference type="Rhea" id="RHEA:67525"/>
    </physiologicalReaction>
</comment>
<comment type="catalytic activity">
    <reaction evidence="1">
        <text>(9Z,12Z,15Z)-octadecatrienoyl-CoA + H2O = S-(9Z,12Z,15Z-octadecatrienoyl)-4'-phosphopantetheine + adenosine 3',5'-bisphosphate + 2 H(+)</text>
        <dbReference type="Rhea" id="RHEA:67532"/>
        <dbReference type="ChEBI" id="CHEBI:15377"/>
        <dbReference type="ChEBI" id="CHEBI:15378"/>
        <dbReference type="ChEBI" id="CHEBI:58343"/>
        <dbReference type="ChEBI" id="CHEBI:74034"/>
        <dbReference type="ChEBI" id="CHEBI:172386"/>
    </reaction>
    <physiologicalReaction direction="left-to-right" evidence="1">
        <dbReference type="Rhea" id="RHEA:67533"/>
    </physiologicalReaction>
</comment>
<comment type="catalytic activity">
    <reaction evidence="1">
        <text>(9Z,12Z)-octadecadienoyl-CoA + H2O = S-(9Z,12Z-octadecadienoyl)-4'-phosphopantetheine + adenosine 3',5'-bisphosphate + 2 H(+)</text>
        <dbReference type="Rhea" id="RHEA:67536"/>
        <dbReference type="ChEBI" id="CHEBI:15377"/>
        <dbReference type="ChEBI" id="CHEBI:15378"/>
        <dbReference type="ChEBI" id="CHEBI:57383"/>
        <dbReference type="ChEBI" id="CHEBI:58343"/>
        <dbReference type="ChEBI" id="CHEBI:172387"/>
    </reaction>
    <physiologicalReaction direction="left-to-right" evidence="1">
        <dbReference type="Rhea" id="RHEA:67537"/>
    </physiologicalReaction>
</comment>
<comment type="catalytic activity">
    <reaction evidence="1">
        <text>(9Z)-hexadecenoyl-CoA + H2O = S-(9Z-hexadecenoyl)-4'-phosphopantetheine + adenosine 3',5'-bisphosphate + 2 H(+)</text>
        <dbReference type="Rhea" id="RHEA:67540"/>
        <dbReference type="ChEBI" id="CHEBI:15377"/>
        <dbReference type="ChEBI" id="CHEBI:15378"/>
        <dbReference type="ChEBI" id="CHEBI:58343"/>
        <dbReference type="ChEBI" id="CHEBI:61540"/>
        <dbReference type="ChEBI" id="CHEBI:172388"/>
    </reaction>
    <physiologicalReaction direction="left-to-right" evidence="1">
        <dbReference type="Rhea" id="RHEA:67541"/>
    </physiologicalReaction>
</comment>
<comment type="catalytic activity">
    <reaction evidence="1">
        <text>(9Z)-tetradecenoyl-CoA + H2O = S-(9Z-tetradecenoyl)-4'-phosphopantetheine + adenosine 3',5'-bisphosphate + 2 H(+)</text>
        <dbReference type="Rhea" id="RHEA:67544"/>
        <dbReference type="ChEBI" id="CHEBI:15377"/>
        <dbReference type="ChEBI" id="CHEBI:15378"/>
        <dbReference type="ChEBI" id="CHEBI:58343"/>
        <dbReference type="ChEBI" id="CHEBI:65060"/>
        <dbReference type="ChEBI" id="CHEBI:172389"/>
    </reaction>
    <physiologicalReaction direction="left-to-right" evidence="1">
        <dbReference type="Rhea" id="RHEA:67545"/>
    </physiologicalReaction>
</comment>
<comment type="catalytic activity">
    <reaction evidence="1">
        <text>(6Z)-octenoyl-CoA + H2O = S-(6Z-octenoyl)-4'-phosphopantetheine + adenosine 3',5'-bisphosphate + 2 H(+)</text>
        <dbReference type="Rhea" id="RHEA:67528"/>
        <dbReference type="ChEBI" id="CHEBI:15377"/>
        <dbReference type="ChEBI" id="CHEBI:15378"/>
        <dbReference type="ChEBI" id="CHEBI:58343"/>
        <dbReference type="ChEBI" id="CHEBI:172383"/>
        <dbReference type="ChEBI" id="CHEBI:172384"/>
    </reaction>
    <physiologicalReaction direction="left-to-right" evidence="1">
        <dbReference type="Rhea" id="RHEA:67529"/>
    </physiologicalReaction>
</comment>
<comment type="catalytic activity">
    <reaction evidence="1">
        <text>hexadecanoyl-CoA + H2O = S-hexadecanoyl-4'-phosphopantetheine + adenosine 3',5'-bisphosphate + 2 H(+)</text>
        <dbReference type="Rhea" id="RHEA:50032"/>
        <dbReference type="ChEBI" id="CHEBI:15377"/>
        <dbReference type="ChEBI" id="CHEBI:15378"/>
        <dbReference type="ChEBI" id="CHEBI:57379"/>
        <dbReference type="ChEBI" id="CHEBI:58343"/>
        <dbReference type="ChEBI" id="CHEBI:132018"/>
    </reaction>
    <physiologicalReaction direction="left-to-right" evidence="1">
        <dbReference type="Rhea" id="RHEA:50033"/>
    </physiologicalReaction>
</comment>
<comment type="catalytic activity">
    <reaction evidence="1">
        <text>tetradecanoyl-CoA + H2O = tetradecanoyl-4'-phosphopantetheine + adenosine 3',5'-bisphosphate + 2 H(+)</text>
        <dbReference type="Rhea" id="RHEA:50028"/>
        <dbReference type="ChEBI" id="CHEBI:15377"/>
        <dbReference type="ChEBI" id="CHEBI:15378"/>
        <dbReference type="ChEBI" id="CHEBI:57385"/>
        <dbReference type="ChEBI" id="CHEBI:58343"/>
        <dbReference type="ChEBI" id="CHEBI:132017"/>
    </reaction>
    <physiologicalReaction direction="left-to-right" evidence="1">
        <dbReference type="Rhea" id="RHEA:50029"/>
    </physiologicalReaction>
</comment>
<comment type="catalytic activity">
    <reaction evidence="1">
        <text>dodecanoyl-CoA + H2O = S-dodecanoyl-4'-phosphopantetheine + adenosine 3',5'-bisphosphate + 2 H(+)</text>
        <dbReference type="Rhea" id="RHEA:50024"/>
        <dbReference type="ChEBI" id="CHEBI:15377"/>
        <dbReference type="ChEBI" id="CHEBI:15378"/>
        <dbReference type="ChEBI" id="CHEBI:57375"/>
        <dbReference type="ChEBI" id="CHEBI:58343"/>
        <dbReference type="ChEBI" id="CHEBI:132015"/>
    </reaction>
    <physiologicalReaction direction="left-to-right" evidence="1">
        <dbReference type="Rhea" id="RHEA:50025"/>
    </physiologicalReaction>
</comment>
<comment type="catalytic activity">
    <reaction evidence="1">
        <text>a 5'-end CoA-ribonucleoside in mRNA + H2O = a 5'-end phospho-adenosine-phospho-ribonucleoside in mRNA + (R)-4'-phosphopantetheine + 2 H(+)</text>
        <dbReference type="Rhea" id="RHEA:67592"/>
        <dbReference type="Rhea" id="RHEA-COMP:15719"/>
        <dbReference type="Rhea" id="RHEA-COMP:17276"/>
        <dbReference type="ChEBI" id="CHEBI:15377"/>
        <dbReference type="ChEBI" id="CHEBI:15378"/>
        <dbReference type="ChEBI" id="CHEBI:61723"/>
        <dbReference type="ChEBI" id="CHEBI:144051"/>
        <dbReference type="ChEBI" id="CHEBI:172371"/>
    </reaction>
    <physiologicalReaction direction="left-to-right" evidence="1">
        <dbReference type="Rhea" id="RHEA:67593"/>
    </physiologicalReaction>
</comment>
<comment type="cofactor">
    <cofactor evidence="1">
        <name>Mg(2+)</name>
        <dbReference type="ChEBI" id="CHEBI:18420"/>
    </cofactor>
    <cofactor evidence="1">
        <name>Mn(2+)</name>
        <dbReference type="ChEBI" id="CHEBI:29035"/>
    </cofactor>
</comment>
<comment type="subunit">
    <text evidence="1">Monomer.</text>
</comment>
<comment type="subcellular location">
    <subcellularLocation>
        <location evidence="1">Peroxisome</location>
    </subcellularLocation>
</comment>
<comment type="similarity">
    <text evidence="5">Belongs to the Nudix hydrolase family.</text>
</comment>
<organism>
    <name type="scientific">Mus saxicola</name>
    <name type="common">Brown spiny mouse</name>
    <name type="synonym">Rock-loving mouse</name>
    <dbReference type="NCBI Taxonomy" id="10094"/>
    <lineage>
        <taxon>Eukaryota</taxon>
        <taxon>Metazoa</taxon>
        <taxon>Chordata</taxon>
        <taxon>Craniata</taxon>
        <taxon>Vertebrata</taxon>
        <taxon>Euteleostomi</taxon>
        <taxon>Mammalia</taxon>
        <taxon>Eutheria</taxon>
        <taxon>Euarchontoglires</taxon>
        <taxon>Glires</taxon>
        <taxon>Rodentia</taxon>
        <taxon>Myomorpha</taxon>
        <taxon>Muroidea</taxon>
        <taxon>Muridae</taxon>
        <taxon>Murinae</taxon>
        <taxon>Mus</taxon>
        <taxon>Pyromys</taxon>
    </lineage>
</organism>
<dbReference type="EC" id="3.6.1.-"/>
<dbReference type="EC" id="3.6.1.77" evidence="1"/>
<dbReference type="PIR" id="B39798">
    <property type="entry name" value="B39798"/>
</dbReference>
<dbReference type="SMR" id="Q7M0H4"/>
<dbReference type="GO" id="GO:0005739">
    <property type="term" value="C:mitochondrion"/>
    <property type="evidence" value="ECO:0007669"/>
    <property type="project" value="TreeGrafter"/>
</dbReference>
<dbReference type="GO" id="GO:0005777">
    <property type="term" value="C:peroxisome"/>
    <property type="evidence" value="ECO:0007669"/>
    <property type="project" value="UniProtKB-SubCell"/>
</dbReference>
<dbReference type="GO" id="GO:0010945">
    <property type="term" value="F:coenzyme A diphosphatase activity"/>
    <property type="evidence" value="ECO:0007669"/>
    <property type="project" value="RHEA"/>
</dbReference>
<dbReference type="GO" id="GO:0000287">
    <property type="term" value="F:magnesium ion binding"/>
    <property type="evidence" value="ECO:0000250"/>
    <property type="project" value="UniProtKB"/>
</dbReference>
<dbReference type="GO" id="GO:0044580">
    <property type="term" value="P:butyryl-CoA catabolic process"/>
    <property type="evidence" value="ECO:0000250"/>
    <property type="project" value="UniProtKB"/>
</dbReference>
<dbReference type="GO" id="GO:0015938">
    <property type="term" value="P:coenzyme A catabolic process"/>
    <property type="evidence" value="ECO:0000250"/>
    <property type="project" value="UniProtKB"/>
</dbReference>
<dbReference type="GO" id="GO:2001294">
    <property type="term" value="P:malonyl-CoA catabolic process"/>
    <property type="evidence" value="ECO:0000250"/>
    <property type="project" value="UniProtKB"/>
</dbReference>
<dbReference type="GO" id="GO:0036114">
    <property type="term" value="P:medium-chain fatty-acyl-CoA catabolic process"/>
    <property type="evidence" value="ECO:0000250"/>
    <property type="project" value="UniProtKB"/>
</dbReference>
<dbReference type="GO" id="GO:1902858">
    <property type="term" value="P:propionyl-CoA metabolic process"/>
    <property type="evidence" value="ECO:0000250"/>
    <property type="project" value="UniProtKB"/>
</dbReference>
<dbReference type="GO" id="GO:1901289">
    <property type="term" value="P:succinyl-CoA catabolic process"/>
    <property type="evidence" value="ECO:0000250"/>
    <property type="project" value="UniProtKB"/>
</dbReference>
<dbReference type="CDD" id="cd18870">
    <property type="entry name" value="NUDIX_AcylCoAdiphos_Nudt19"/>
    <property type="match status" value="1"/>
</dbReference>
<dbReference type="Gene3D" id="3.90.79.10">
    <property type="entry name" value="Nucleoside Triphosphate Pyrophosphohydrolase"/>
    <property type="match status" value="1"/>
</dbReference>
<dbReference type="InterPro" id="IPR015797">
    <property type="entry name" value="NUDIX_hydrolase-like_dom_sf"/>
</dbReference>
<dbReference type="InterPro" id="IPR000086">
    <property type="entry name" value="NUDIX_hydrolase_dom"/>
</dbReference>
<dbReference type="InterPro" id="IPR039121">
    <property type="entry name" value="NUDT19"/>
</dbReference>
<dbReference type="PANTHER" id="PTHR12318:SF0">
    <property type="entry name" value="ACYL-COENZYME A DIPHOSPHATASE NUDT19"/>
    <property type="match status" value="1"/>
</dbReference>
<dbReference type="PANTHER" id="PTHR12318">
    <property type="entry name" value="TESTOSTERONE-REGULATED PROTEIN RP2"/>
    <property type="match status" value="1"/>
</dbReference>
<dbReference type="SUPFAM" id="SSF55811">
    <property type="entry name" value="Nudix"/>
    <property type="match status" value="1"/>
</dbReference>
<dbReference type="PROSITE" id="PS51462">
    <property type="entry name" value="NUDIX"/>
    <property type="match status" value="1"/>
</dbReference>
<protein>
    <recommendedName>
        <fullName>Acyl-coenzyme A diphosphatase NUDT19</fullName>
        <ecNumber>3.6.1.-</ecNumber>
        <ecNumber evidence="1">3.6.1.77</ecNumber>
    </recommendedName>
    <alternativeName>
        <fullName>Androgen-regulated protein RP2</fullName>
    </alternativeName>
    <alternativeName>
        <fullName>Nucleoside diphosphate-linked moiety X motif 19</fullName>
        <shortName>Nudix motif 19</shortName>
    </alternativeName>
    <alternativeName>
        <fullName>Testosterone-regulated RP2 protein</fullName>
        <shortName>RP2p</shortName>
    </alternativeName>
</protein>
<accession>Q7M0H4</accession>
<reference key="1">
    <citation type="journal article" date="1991" name="Mol. Biol. Evol.">
        <title>Evolution of messenger RNA structure and regulation in the genus Mus: the androgen-inducible RP2 mRNAs.</title>
        <authorList>
            <person name="Chaudhuri A."/>
            <person name="Barbour K.W."/>
            <person name="Berger F.G."/>
        </authorList>
    </citation>
    <scope>NUCLEOTIDE SEQUENCE [MRNA]</scope>
</reference>
<gene>
    <name type="primary">Nudt19</name>
</gene>
<evidence type="ECO:0000250" key="1">
    <source>
        <dbReference type="UniProtKB" id="P11930"/>
    </source>
</evidence>
<evidence type="ECO:0000255" key="2"/>
<evidence type="ECO:0000255" key="3">
    <source>
        <dbReference type="PROSITE-ProRule" id="PRU00794"/>
    </source>
</evidence>
<evidence type="ECO:0000256" key="4">
    <source>
        <dbReference type="SAM" id="MobiDB-lite"/>
    </source>
</evidence>
<evidence type="ECO:0000305" key="5"/>
<feature type="chain" id="PRO_0000324573" description="Acyl-coenzyme A diphosphatase NUDT19">
    <location>
        <begin position="1"/>
        <end position="356"/>
    </location>
</feature>
<feature type="domain" description="Nudix hydrolase" evidence="3">
    <location>
        <begin position="10"/>
        <end position="241"/>
    </location>
</feature>
<feature type="region of interest" description="Disordered" evidence="4">
    <location>
        <begin position="72"/>
        <end position="94"/>
    </location>
</feature>
<feature type="short sequence motif" description="Nudix box">
    <location>
        <begin position="97"/>
        <end position="118"/>
    </location>
</feature>
<feature type="short sequence motif" description="Microbody targeting signal" evidence="2">
    <location>
        <begin position="354"/>
        <end position="356"/>
    </location>
</feature>
<feature type="compositionally biased region" description="Pro residues" evidence="4">
    <location>
        <begin position="78"/>
        <end position="87"/>
    </location>
</feature>
<feature type="binding site" evidence="1">
    <location>
        <position position="112"/>
    </location>
    <ligand>
        <name>Mg(2+)</name>
        <dbReference type="ChEBI" id="CHEBI:18420"/>
    </ligand>
</feature>
<feature type="binding site" evidence="1">
    <location>
        <position position="116"/>
    </location>
    <ligand>
        <name>Mg(2+)</name>
        <dbReference type="ChEBI" id="CHEBI:18420"/>
    </ligand>
</feature>
<feature type="site" description="Important for coenzyme A binding" evidence="1">
    <location>
        <position position="34"/>
    </location>
</feature>
<feature type="site" description="Important for coenzyme A binding" evidence="1">
    <location>
        <position position="40"/>
    </location>
</feature>
<feature type="site" description="Important for coenzyme A binding" evidence="1">
    <location>
        <position position="41"/>
    </location>
</feature>
<feature type="site" description="Important for coenzyme A binding" evidence="1">
    <location>
        <position position="188"/>
    </location>
</feature>
<feature type="modified residue" description="N6-succinyllysine" evidence="1">
    <location>
        <position position="299"/>
    </location>
</feature>
<proteinExistence type="evidence at transcript level"/>
<keyword id="KW-0378">Hydrolase</keyword>
<keyword id="KW-0460">Magnesium</keyword>
<keyword id="KW-0464">Manganese</keyword>
<keyword id="KW-0479">Metal-binding</keyword>
<keyword id="KW-0576">Peroxisome</keyword>
<name>NUD19_MUSSA</name>
<sequence>MSGQSSWRRAATVMLAAGWTHSSPAGFRLLLLQRAQNQRFLPGAHVFPGGVLDAADSSPDWVRLFAPRHTPPRFGLGPEPPRQPPFPGLSHGDADPAALPDDVALRICAIRETFEEAGVLLLRPRDAPASQEPSQALSPPAGLAEWRSRVRSDPRCFLQLCAHLDCTPDIWALHDWGGWLTPYGRSLRRFDTTFLLCCLRDTPRVEPDLAEVVGYQWLSPSEATECFLSKEIWLAPPQFYEMRRLENFASLSALYRFCSDRPLEVAQKWLPIILVTSDGSVHLLPGDELYVKDSDFLEKNMSTDKKTEEIMKEGKVLNRIVIRSPYVYEIYVTLPSENKHVFPRNYIVNKSRTARL</sequence>